<dbReference type="EC" id="6.3.5.-" evidence="1"/>
<dbReference type="EMBL" id="AE017285">
    <property type="protein sequence ID" value="AAS95289.1"/>
    <property type="molecule type" value="Genomic_DNA"/>
</dbReference>
<dbReference type="RefSeq" id="WP_010938110.1">
    <property type="nucleotide sequence ID" value="NC_002937.3"/>
</dbReference>
<dbReference type="RefSeq" id="YP_010030.1">
    <property type="nucleotide sequence ID" value="NC_002937.3"/>
</dbReference>
<dbReference type="SMR" id="Q72DX0"/>
<dbReference type="IntAct" id="Q72DX0">
    <property type="interactions" value="2"/>
</dbReference>
<dbReference type="STRING" id="882.DVU_0809"/>
<dbReference type="PaxDb" id="882-DVU_0809"/>
<dbReference type="EnsemblBacteria" id="AAS95289">
    <property type="protein sequence ID" value="AAS95289"/>
    <property type="gene ID" value="DVU_0809"/>
</dbReference>
<dbReference type="KEGG" id="dvu:DVU_0809"/>
<dbReference type="PATRIC" id="fig|882.5.peg.758"/>
<dbReference type="eggNOG" id="COG0721">
    <property type="taxonomic scope" value="Bacteria"/>
</dbReference>
<dbReference type="HOGENOM" id="CLU_105899_6_1_7"/>
<dbReference type="OrthoDB" id="9813938at2"/>
<dbReference type="PhylomeDB" id="Q72DX0"/>
<dbReference type="Proteomes" id="UP000002194">
    <property type="component" value="Chromosome"/>
</dbReference>
<dbReference type="GO" id="GO:0050566">
    <property type="term" value="F:asparaginyl-tRNA synthase (glutamine-hydrolyzing) activity"/>
    <property type="evidence" value="ECO:0007669"/>
    <property type="project" value="RHEA"/>
</dbReference>
<dbReference type="GO" id="GO:0005524">
    <property type="term" value="F:ATP binding"/>
    <property type="evidence" value="ECO:0007669"/>
    <property type="project" value="UniProtKB-KW"/>
</dbReference>
<dbReference type="GO" id="GO:0050567">
    <property type="term" value="F:glutaminyl-tRNA synthase (glutamine-hydrolyzing) activity"/>
    <property type="evidence" value="ECO:0007669"/>
    <property type="project" value="UniProtKB-UniRule"/>
</dbReference>
<dbReference type="GO" id="GO:0070681">
    <property type="term" value="P:glutaminyl-tRNAGln biosynthesis via transamidation"/>
    <property type="evidence" value="ECO:0007669"/>
    <property type="project" value="TreeGrafter"/>
</dbReference>
<dbReference type="GO" id="GO:0006450">
    <property type="term" value="P:regulation of translational fidelity"/>
    <property type="evidence" value="ECO:0007669"/>
    <property type="project" value="InterPro"/>
</dbReference>
<dbReference type="GO" id="GO:0006412">
    <property type="term" value="P:translation"/>
    <property type="evidence" value="ECO:0007669"/>
    <property type="project" value="UniProtKB-UniRule"/>
</dbReference>
<dbReference type="Gene3D" id="1.10.20.60">
    <property type="entry name" value="Glu-tRNAGln amidotransferase C subunit, N-terminal domain"/>
    <property type="match status" value="1"/>
</dbReference>
<dbReference type="HAMAP" id="MF_00122">
    <property type="entry name" value="GatC"/>
    <property type="match status" value="1"/>
</dbReference>
<dbReference type="InterPro" id="IPR036113">
    <property type="entry name" value="Asp/Glu-ADT_sf_sub_c"/>
</dbReference>
<dbReference type="InterPro" id="IPR003837">
    <property type="entry name" value="GatC"/>
</dbReference>
<dbReference type="NCBIfam" id="TIGR00135">
    <property type="entry name" value="gatC"/>
    <property type="match status" value="1"/>
</dbReference>
<dbReference type="PANTHER" id="PTHR15004">
    <property type="entry name" value="GLUTAMYL-TRNA(GLN) AMIDOTRANSFERASE SUBUNIT C, MITOCHONDRIAL"/>
    <property type="match status" value="1"/>
</dbReference>
<dbReference type="PANTHER" id="PTHR15004:SF0">
    <property type="entry name" value="GLUTAMYL-TRNA(GLN) AMIDOTRANSFERASE SUBUNIT C, MITOCHONDRIAL"/>
    <property type="match status" value="1"/>
</dbReference>
<dbReference type="Pfam" id="PF02686">
    <property type="entry name" value="GatC"/>
    <property type="match status" value="1"/>
</dbReference>
<dbReference type="SUPFAM" id="SSF141000">
    <property type="entry name" value="Glu-tRNAGln amidotransferase C subunit"/>
    <property type="match status" value="1"/>
</dbReference>
<keyword id="KW-0067">ATP-binding</keyword>
<keyword id="KW-0436">Ligase</keyword>
<keyword id="KW-0547">Nucleotide-binding</keyword>
<keyword id="KW-0648">Protein biosynthesis</keyword>
<keyword id="KW-1185">Reference proteome</keyword>
<sequence>MKISKEQVATIARLARLDLDEARLERFAGQFGDILDYMDMLGAVDTTDVEPLYSPSEHGTVLRADEVHTHCTREELLANAPESDGQFFVVPRIV</sequence>
<accession>Q72DX0</accession>
<proteinExistence type="inferred from homology"/>
<comment type="function">
    <text evidence="1">Allows the formation of correctly charged Asn-tRNA(Asn) or Gln-tRNA(Gln) through the transamidation of misacylated Asp-tRNA(Asn) or Glu-tRNA(Gln) in organisms which lack either or both of asparaginyl-tRNA or glutaminyl-tRNA synthetases. The reaction takes place in the presence of glutamine and ATP through an activated phospho-Asp-tRNA(Asn) or phospho-Glu-tRNA(Gln).</text>
</comment>
<comment type="catalytic activity">
    <reaction evidence="1">
        <text>L-glutamyl-tRNA(Gln) + L-glutamine + ATP + H2O = L-glutaminyl-tRNA(Gln) + L-glutamate + ADP + phosphate + H(+)</text>
        <dbReference type="Rhea" id="RHEA:17521"/>
        <dbReference type="Rhea" id="RHEA-COMP:9681"/>
        <dbReference type="Rhea" id="RHEA-COMP:9684"/>
        <dbReference type="ChEBI" id="CHEBI:15377"/>
        <dbReference type="ChEBI" id="CHEBI:15378"/>
        <dbReference type="ChEBI" id="CHEBI:29985"/>
        <dbReference type="ChEBI" id="CHEBI:30616"/>
        <dbReference type="ChEBI" id="CHEBI:43474"/>
        <dbReference type="ChEBI" id="CHEBI:58359"/>
        <dbReference type="ChEBI" id="CHEBI:78520"/>
        <dbReference type="ChEBI" id="CHEBI:78521"/>
        <dbReference type="ChEBI" id="CHEBI:456216"/>
    </reaction>
</comment>
<comment type="catalytic activity">
    <reaction evidence="1">
        <text>L-aspartyl-tRNA(Asn) + L-glutamine + ATP + H2O = L-asparaginyl-tRNA(Asn) + L-glutamate + ADP + phosphate + 2 H(+)</text>
        <dbReference type="Rhea" id="RHEA:14513"/>
        <dbReference type="Rhea" id="RHEA-COMP:9674"/>
        <dbReference type="Rhea" id="RHEA-COMP:9677"/>
        <dbReference type="ChEBI" id="CHEBI:15377"/>
        <dbReference type="ChEBI" id="CHEBI:15378"/>
        <dbReference type="ChEBI" id="CHEBI:29985"/>
        <dbReference type="ChEBI" id="CHEBI:30616"/>
        <dbReference type="ChEBI" id="CHEBI:43474"/>
        <dbReference type="ChEBI" id="CHEBI:58359"/>
        <dbReference type="ChEBI" id="CHEBI:78515"/>
        <dbReference type="ChEBI" id="CHEBI:78516"/>
        <dbReference type="ChEBI" id="CHEBI:456216"/>
    </reaction>
</comment>
<comment type="subunit">
    <text evidence="1">Heterotrimer of A, B and C subunits.</text>
</comment>
<comment type="similarity">
    <text evidence="1">Belongs to the GatC family.</text>
</comment>
<name>GATC_NITV2</name>
<evidence type="ECO:0000255" key="1">
    <source>
        <dbReference type="HAMAP-Rule" id="MF_00122"/>
    </source>
</evidence>
<reference key="1">
    <citation type="journal article" date="2004" name="Nat. Biotechnol.">
        <title>The genome sequence of the anaerobic, sulfate-reducing bacterium Desulfovibrio vulgaris Hildenborough.</title>
        <authorList>
            <person name="Heidelberg J.F."/>
            <person name="Seshadri R."/>
            <person name="Haveman S.A."/>
            <person name="Hemme C.L."/>
            <person name="Paulsen I.T."/>
            <person name="Kolonay J.F."/>
            <person name="Eisen J.A."/>
            <person name="Ward N.L."/>
            <person name="Methe B.A."/>
            <person name="Brinkac L.M."/>
            <person name="Daugherty S.C."/>
            <person name="DeBoy R.T."/>
            <person name="Dodson R.J."/>
            <person name="Durkin A.S."/>
            <person name="Madupu R."/>
            <person name="Nelson W.C."/>
            <person name="Sullivan S.A."/>
            <person name="Fouts D.E."/>
            <person name="Haft D.H."/>
            <person name="Selengut J."/>
            <person name="Peterson J.D."/>
            <person name="Davidsen T.M."/>
            <person name="Zafar N."/>
            <person name="Zhou L."/>
            <person name="Radune D."/>
            <person name="Dimitrov G."/>
            <person name="Hance M."/>
            <person name="Tran K."/>
            <person name="Khouri H.M."/>
            <person name="Gill J."/>
            <person name="Utterback T.R."/>
            <person name="Feldblyum T.V."/>
            <person name="Wall J.D."/>
            <person name="Voordouw G."/>
            <person name="Fraser C.M."/>
        </authorList>
    </citation>
    <scope>NUCLEOTIDE SEQUENCE [LARGE SCALE GENOMIC DNA]</scope>
    <source>
        <strain>ATCC 29579 / DSM 644 / CCUG 34227 / NCIMB 8303 / VKM B-1760 / Hildenborough</strain>
    </source>
</reference>
<feature type="chain" id="PRO_1000016119" description="Aspartyl/glutamyl-tRNA(Asn/Gln) amidotransferase subunit C">
    <location>
        <begin position="1"/>
        <end position="94"/>
    </location>
</feature>
<organism>
    <name type="scientific">Nitratidesulfovibrio vulgaris (strain ATCC 29579 / DSM 644 / CCUG 34227 / NCIMB 8303 / VKM B-1760 / Hildenborough)</name>
    <name type="common">Desulfovibrio vulgaris</name>
    <dbReference type="NCBI Taxonomy" id="882"/>
    <lineage>
        <taxon>Bacteria</taxon>
        <taxon>Pseudomonadati</taxon>
        <taxon>Thermodesulfobacteriota</taxon>
        <taxon>Desulfovibrionia</taxon>
        <taxon>Desulfovibrionales</taxon>
        <taxon>Desulfovibrionaceae</taxon>
        <taxon>Nitratidesulfovibrio</taxon>
    </lineage>
</organism>
<gene>
    <name evidence="1" type="primary">gatC</name>
    <name type="ordered locus">DVU_0809</name>
</gene>
<protein>
    <recommendedName>
        <fullName evidence="1">Aspartyl/glutamyl-tRNA(Asn/Gln) amidotransferase subunit C</fullName>
        <shortName evidence="1">Asp/Glu-ADT subunit C</shortName>
        <ecNumber evidence="1">6.3.5.-</ecNumber>
    </recommendedName>
</protein>